<keyword id="KW-1185">Reference proteome</keyword>
<keyword id="KW-0687">Ribonucleoprotein</keyword>
<keyword id="KW-0689">Ribosomal protein</keyword>
<keyword id="KW-0694">RNA-binding</keyword>
<keyword id="KW-0699">rRNA-binding</keyword>
<gene>
    <name evidence="1" type="primary">rpsO</name>
    <name type="ordered locus">Bxeno_A1223</name>
    <name type="ORF">Bxe_A3219</name>
</gene>
<evidence type="ECO:0000255" key="1">
    <source>
        <dbReference type="HAMAP-Rule" id="MF_01343"/>
    </source>
</evidence>
<evidence type="ECO:0000305" key="2"/>
<sequence length="90" mass="10286">MSAVETSKKSEVVAQFARAANDTGSPEVQVALLTTRINELTVHFKAHTKDHHSRRGLLRMVSRRRKLLDYLKGKDADRYRALIEKLGLRK</sequence>
<protein>
    <recommendedName>
        <fullName evidence="1">Small ribosomal subunit protein uS15</fullName>
    </recommendedName>
    <alternativeName>
        <fullName evidence="2">30S ribosomal protein S15</fullName>
    </alternativeName>
</protein>
<feature type="chain" id="PRO_0000255484" description="Small ribosomal subunit protein uS15">
    <location>
        <begin position="1"/>
        <end position="90"/>
    </location>
</feature>
<comment type="function">
    <text evidence="1">One of the primary rRNA binding proteins, it binds directly to 16S rRNA where it helps nucleate assembly of the platform of the 30S subunit by binding and bridging several RNA helices of the 16S rRNA.</text>
</comment>
<comment type="function">
    <text evidence="1">Forms an intersubunit bridge (bridge B4) with the 23S rRNA of the 50S subunit in the ribosome.</text>
</comment>
<comment type="subunit">
    <text evidence="1">Part of the 30S ribosomal subunit. Forms a bridge to the 50S subunit in the 70S ribosome, contacting the 23S rRNA.</text>
</comment>
<comment type="similarity">
    <text evidence="1">Belongs to the universal ribosomal protein uS15 family.</text>
</comment>
<reference key="1">
    <citation type="journal article" date="2006" name="Proc. Natl. Acad. Sci. U.S.A.">
        <title>Burkholderia xenovorans LB400 harbors a multi-replicon, 9.73-Mbp genome shaped for versatility.</title>
        <authorList>
            <person name="Chain P.S.G."/>
            <person name="Denef V.J."/>
            <person name="Konstantinidis K.T."/>
            <person name="Vergez L.M."/>
            <person name="Agullo L."/>
            <person name="Reyes V.L."/>
            <person name="Hauser L."/>
            <person name="Cordova M."/>
            <person name="Gomez L."/>
            <person name="Gonzalez M."/>
            <person name="Land M."/>
            <person name="Lao V."/>
            <person name="Larimer F."/>
            <person name="LiPuma J.J."/>
            <person name="Mahenthiralingam E."/>
            <person name="Malfatti S.A."/>
            <person name="Marx C.J."/>
            <person name="Parnell J.J."/>
            <person name="Ramette A."/>
            <person name="Richardson P."/>
            <person name="Seeger M."/>
            <person name="Smith D."/>
            <person name="Spilker T."/>
            <person name="Sul W.J."/>
            <person name="Tsoi T.V."/>
            <person name="Ulrich L.E."/>
            <person name="Zhulin I.B."/>
            <person name="Tiedje J.M."/>
        </authorList>
    </citation>
    <scope>NUCLEOTIDE SEQUENCE [LARGE SCALE GENOMIC DNA]</scope>
    <source>
        <strain>LB400</strain>
    </source>
</reference>
<organism>
    <name type="scientific">Paraburkholderia xenovorans (strain LB400)</name>
    <dbReference type="NCBI Taxonomy" id="266265"/>
    <lineage>
        <taxon>Bacteria</taxon>
        <taxon>Pseudomonadati</taxon>
        <taxon>Pseudomonadota</taxon>
        <taxon>Betaproteobacteria</taxon>
        <taxon>Burkholderiales</taxon>
        <taxon>Burkholderiaceae</taxon>
        <taxon>Paraburkholderia</taxon>
    </lineage>
</organism>
<dbReference type="EMBL" id="CP000270">
    <property type="protein sequence ID" value="ABE29761.1"/>
    <property type="molecule type" value="Genomic_DNA"/>
</dbReference>
<dbReference type="RefSeq" id="WP_011487489.1">
    <property type="nucleotide sequence ID" value="NZ_CP008760.1"/>
</dbReference>
<dbReference type="SMR" id="Q142H8"/>
<dbReference type="STRING" id="266265.Bxe_A3219"/>
<dbReference type="GeneID" id="97309948"/>
<dbReference type="KEGG" id="bxb:DR64_922"/>
<dbReference type="KEGG" id="bxe:Bxe_A3219"/>
<dbReference type="eggNOG" id="COG0184">
    <property type="taxonomic scope" value="Bacteria"/>
</dbReference>
<dbReference type="OrthoDB" id="9799262at2"/>
<dbReference type="Proteomes" id="UP000001817">
    <property type="component" value="Chromosome 1"/>
</dbReference>
<dbReference type="GO" id="GO:0022627">
    <property type="term" value="C:cytosolic small ribosomal subunit"/>
    <property type="evidence" value="ECO:0007669"/>
    <property type="project" value="TreeGrafter"/>
</dbReference>
<dbReference type="GO" id="GO:0019843">
    <property type="term" value="F:rRNA binding"/>
    <property type="evidence" value="ECO:0007669"/>
    <property type="project" value="UniProtKB-UniRule"/>
</dbReference>
<dbReference type="GO" id="GO:0003735">
    <property type="term" value="F:structural constituent of ribosome"/>
    <property type="evidence" value="ECO:0007669"/>
    <property type="project" value="InterPro"/>
</dbReference>
<dbReference type="GO" id="GO:0006412">
    <property type="term" value="P:translation"/>
    <property type="evidence" value="ECO:0007669"/>
    <property type="project" value="UniProtKB-UniRule"/>
</dbReference>
<dbReference type="CDD" id="cd00353">
    <property type="entry name" value="Ribosomal_S15p_S13e"/>
    <property type="match status" value="1"/>
</dbReference>
<dbReference type="FunFam" id="1.10.287.10:FF:000002">
    <property type="entry name" value="30S ribosomal protein S15"/>
    <property type="match status" value="1"/>
</dbReference>
<dbReference type="Gene3D" id="6.10.250.3130">
    <property type="match status" value="1"/>
</dbReference>
<dbReference type="Gene3D" id="1.10.287.10">
    <property type="entry name" value="S15/NS1, RNA-binding"/>
    <property type="match status" value="1"/>
</dbReference>
<dbReference type="HAMAP" id="MF_01343_B">
    <property type="entry name" value="Ribosomal_uS15_B"/>
    <property type="match status" value="1"/>
</dbReference>
<dbReference type="InterPro" id="IPR000589">
    <property type="entry name" value="Ribosomal_uS15"/>
</dbReference>
<dbReference type="InterPro" id="IPR005290">
    <property type="entry name" value="Ribosomal_uS15_bac-type"/>
</dbReference>
<dbReference type="InterPro" id="IPR009068">
    <property type="entry name" value="uS15_NS1_RNA-bd_sf"/>
</dbReference>
<dbReference type="NCBIfam" id="TIGR00952">
    <property type="entry name" value="S15_bact"/>
    <property type="match status" value="1"/>
</dbReference>
<dbReference type="PANTHER" id="PTHR23321">
    <property type="entry name" value="RIBOSOMAL PROTEIN S15, BACTERIAL AND ORGANELLAR"/>
    <property type="match status" value="1"/>
</dbReference>
<dbReference type="PANTHER" id="PTHR23321:SF26">
    <property type="entry name" value="SMALL RIBOSOMAL SUBUNIT PROTEIN US15M"/>
    <property type="match status" value="1"/>
</dbReference>
<dbReference type="Pfam" id="PF00312">
    <property type="entry name" value="Ribosomal_S15"/>
    <property type="match status" value="1"/>
</dbReference>
<dbReference type="SMART" id="SM01387">
    <property type="entry name" value="Ribosomal_S15"/>
    <property type="match status" value="1"/>
</dbReference>
<dbReference type="SUPFAM" id="SSF47060">
    <property type="entry name" value="S15/NS1 RNA-binding domain"/>
    <property type="match status" value="1"/>
</dbReference>
<dbReference type="PROSITE" id="PS00362">
    <property type="entry name" value="RIBOSOMAL_S15"/>
    <property type="match status" value="1"/>
</dbReference>
<name>RS15_PARXL</name>
<proteinExistence type="inferred from homology"/>
<accession>Q142H8</accession>